<comment type="function">
    <text evidence="1">Specifically methylates the N4 position of cytidine in position 1402 (C1402) of 16S rRNA.</text>
</comment>
<comment type="catalytic activity">
    <reaction evidence="1">
        <text>cytidine(1402) in 16S rRNA + S-adenosyl-L-methionine = N(4)-methylcytidine(1402) in 16S rRNA + S-adenosyl-L-homocysteine + H(+)</text>
        <dbReference type="Rhea" id="RHEA:42928"/>
        <dbReference type="Rhea" id="RHEA-COMP:10286"/>
        <dbReference type="Rhea" id="RHEA-COMP:10287"/>
        <dbReference type="ChEBI" id="CHEBI:15378"/>
        <dbReference type="ChEBI" id="CHEBI:57856"/>
        <dbReference type="ChEBI" id="CHEBI:59789"/>
        <dbReference type="ChEBI" id="CHEBI:74506"/>
        <dbReference type="ChEBI" id="CHEBI:82748"/>
        <dbReference type="EC" id="2.1.1.199"/>
    </reaction>
</comment>
<comment type="subcellular location">
    <subcellularLocation>
        <location evidence="1">Cytoplasm</location>
    </subcellularLocation>
</comment>
<comment type="similarity">
    <text evidence="1">Belongs to the methyltransferase superfamily. RsmH family.</text>
</comment>
<accession>B8E088</accession>
<evidence type="ECO:0000255" key="1">
    <source>
        <dbReference type="HAMAP-Rule" id="MF_01007"/>
    </source>
</evidence>
<proteinExistence type="inferred from homology"/>
<feature type="chain" id="PRO_0000386860" description="Ribosomal RNA small subunit methyltransferase H">
    <location>
        <begin position="1"/>
        <end position="295"/>
    </location>
</feature>
<feature type="binding site" evidence="1">
    <location>
        <begin position="36"/>
        <end position="38"/>
    </location>
    <ligand>
        <name>S-adenosyl-L-methionine</name>
        <dbReference type="ChEBI" id="CHEBI:59789"/>
    </ligand>
</feature>
<feature type="binding site" evidence="1">
    <location>
        <position position="56"/>
    </location>
    <ligand>
        <name>S-adenosyl-L-methionine</name>
        <dbReference type="ChEBI" id="CHEBI:59789"/>
    </ligand>
</feature>
<feature type="binding site" evidence="1">
    <location>
        <position position="90"/>
    </location>
    <ligand>
        <name>S-adenosyl-L-methionine</name>
        <dbReference type="ChEBI" id="CHEBI:59789"/>
    </ligand>
</feature>
<feature type="binding site" evidence="1">
    <location>
        <position position="104"/>
    </location>
    <ligand>
        <name>S-adenosyl-L-methionine</name>
        <dbReference type="ChEBI" id="CHEBI:59789"/>
    </ligand>
</feature>
<feature type="binding site" evidence="1">
    <location>
        <position position="111"/>
    </location>
    <ligand>
        <name>S-adenosyl-L-methionine</name>
        <dbReference type="ChEBI" id="CHEBI:59789"/>
    </ligand>
</feature>
<sequence>MEEIEIIHKPVMLKEVIHYLKLSPGKIVVDATLGLGGHSSEILRELKGEGLLIGIDRDEEVLNLARERLRKIANNFVLFNTTYDKVQEILKELKLSFIDAILFDLGFSSFHIEKSERGFSFMRPEEPLDMRYSKDTTLTAADILNSFNELELSNLFWEYGEEPLSRKLAKKIVERRKEKKFVYVKDLLEVVEEVIPKRKRHEATKVFQALRIVVNDEVNILKRALDQIPFILAPRGRIVVLTYHSIEDRVVKNFFKSHSDKIFPVNKKVIRPSVNEIRENRRARSAKLRVGERRE</sequence>
<organism>
    <name type="scientific">Dictyoglomus turgidum (strain DSM 6724 / Z-1310)</name>
    <dbReference type="NCBI Taxonomy" id="515635"/>
    <lineage>
        <taxon>Bacteria</taxon>
        <taxon>Pseudomonadati</taxon>
        <taxon>Dictyoglomota</taxon>
        <taxon>Dictyoglomia</taxon>
        <taxon>Dictyoglomales</taxon>
        <taxon>Dictyoglomaceae</taxon>
        <taxon>Dictyoglomus</taxon>
    </lineage>
</organism>
<protein>
    <recommendedName>
        <fullName evidence="1">Ribosomal RNA small subunit methyltransferase H</fullName>
        <ecNumber evidence="1">2.1.1.199</ecNumber>
    </recommendedName>
    <alternativeName>
        <fullName evidence="1">16S rRNA m(4)C1402 methyltransferase</fullName>
    </alternativeName>
    <alternativeName>
        <fullName evidence="1">rRNA (cytosine-N(4)-)-methyltransferase RsmH</fullName>
    </alternativeName>
</protein>
<gene>
    <name evidence="1" type="primary">rsmH</name>
    <name type="synonym">mraW</name>
    <name type="ordered locus">Dtur_1255</name>
</gene>
<dbReference type="EC" id="2.1.1.199" evidence="1"/>
<dbReference type="EMBL" id="CP001251">
    <property type="protein sequence ID" value="ACK42533.1"/>
    <property type="molecule type" value="Genomic_DNA"/>
</dbReference>
<dbReference type="RefSeq" id="WP_012583615.1">
    <property type="nucleotide sequence ID" value="NC_011661.1"/>
</dbReference>
<dbReference type="RefSeq" id="YP_002353147.1">
    <property type="nucleotide sequence ID" value="NC_011661.1"/>
</dbReference>
<dbReference type="SMR" id="B8E088"/>
<dbReference type="FunCoup" id="B8E088">
    <property type="interactions" value="346"/>
</dbReference>
<dbReference type="STRING" id="515635.Dtur_1255"/>
<dbReference type="EnsemblBacteria" id="ACK42533">
    <property type="protein sequence ID" value="ACK42533"/>
    <property type="gene ID" value="Dtur_1255"/>
</dbReference>
<dbReference type="KEGG" id="dtu:Dtur_1255"/>
<dbReference type="PATRIC" id="fig|515635.4.peg.1295"/>
<dbReference type="eggNOG" id="COG0275">
    <property type="taxonomic scope" value="Bacteria"/>
</dbReference>
<dbReference type="HOGENOM" id="CLU_038422_3_0_0"/>
<dbReference type="InParanoid" id="B8E088"/>
<dbReference type="OrthoDB" id="9806637at2"/>
<dbReference type="Proteomes" id="UP000007719">
    <property type="component" value="Chromosome"/>
</dbReference>
<dbReference type="GO" id="GO:0005737">
    <property type="term" value="C:cytoplasm"/>
    <property type="evidence" value="ECO:0000318"/>
    <property type="project" value="GO_Central"/>
</dbReference>
<dbReference type="GO" id="GO:0071424">
    <property type="term" value="F:rRNA (cytosine-N4-)-methyltransferase activity"/>
    <property type="evidence" value="ECO:0000318"/>
    <property type="project" value="GO_Central"/>
</dbReference>
<dbReference type="GO" id="GO:0070475">
    <property type="term" value="P:rRNA base methylation"/>
    <property type="evidence" value="ECO:0000318"/>
    <property type="project" value="GO_Central"/>
</dbReference>
<dbReference type="FunFam" id="1.10.150.170:FF:000003">
    <property type="entry name" value="Ribosomal RNA small subunit methyltransferase H"/>
    <property type="match status" value="1"/>
</dbReference>
<dbReference type="Gene3D" id="1.10.150.170">
    <property type="entry name" value="Putative methyltransferase TM0872, insert domain"/>
    <property type="match status" value="1"/>
</dbReference>
<dbReference type="Gene3D" id="3.40.50.150">
    <property type="entry name" value="Vaccinia Virus protein VP39"/>
    <property type="match status" value="1"/>
</dbReference>
<dbReference type="HAMAP" id="MF_01007">
    <property type="entry name" value="16SrRNA_methyltr_H"/>
    <property type="match status" value="1"/>
</dbReference>
<dbReference type="InterPro" id="IPR002903">
    <property type="entry name" value="RsmH"/>
</dbReference>
<dbReference type="InterPro" id="IPR023397">
    <property type="entry name" value="SAM-dep_MeTrfase_MraW_recog"/>
</dbReference>
<dbReference type="InterPro" id="IPR029063">
    <property type="entry name" value="SAM-dependent_MTases_sf"/>
</dbReference>
<dbReference type="NCBIfam" id="TIGR00006">
    <property type="entry name" value="16S rRNA (cytosine(1402)-N(4))-methyltransferase RsmH"/>
    <property type="match status" value="1"/>
</dbReference>
<dbReference type="PANTHER" id="PTHR11265:SF0">
    <property type="entry name" value="12S RRNA N4-METHYLCYTIDINE METHYLTRANSFERASE"/>
    <property type="match status" value="1"/>
</dbReference>
<dbReference type="PANTHER" id="PTHR11265">
    <property type="entry name" value="S-ADENOSYL-METHYLTRANSFERASE MRAW"/>
    <property type="match status" value="1"/>
</dbReference>
<dbReference type="Pfam" id="PF01795">
    <property type="entry name" value="Methyltransf_5"/>
    <property type="match status" value="1"/>
</dbReference>
<dbReference type="PIRSF" id="PIRSF004486">
    <property type="entry name" value="MraW"/>
    <property type="match status" value="1"/>
</dbReference>
<dbReference type="SUPFAM" id="SSF81799">
    <property type="entry name" value="Putative methyltransferase TM0872, insert domain"/>
    <property type="match status" value="1"/>
</dbReference>
<dbReference type="SUPFAM" id="SSF53335">
    <property type="entry name" value="S-adenosyl-L-methionine-dependent methyltransferases"/>
    <property type="match status" value="1"/>
</dbReference>
<keyword id="KW-0963">Cytoplasm</keyword>
<keyword id="KW-0489">Methyltransferase</keyword>
<keyword id="KW-1185">Reference proteome</keyword>
<keyword id="KW-0698">rRNA processing</keyword>
<keyword id="KW-0949">S-adenosyl-L-methionine</keyword>
<keyword id="KW-0808">Transferase</keyword>
<name>RSMH_DICTD</name>
<reference key="1">
    <citation type="journal article" date="2016" name="Front. Microbiol.">
        <title>The complete genome sequence of hyperthermophile Dictyoglomus turgidum DSM 6724 reveals a specialized carbohydrate fermentor.</title>
        <authorList>
            <person name="Brumm P.J."/>
            <person name="Gowda K."/>
            <person name="Robb F.T."/>
            <person name="Mead D.A."/>
        </authorList>
    </citation>
    <scope>NUCLEOTIDE SEQUENCE [LARGE SCALE GENOMIC DNA]</scope>
    <source>
        <strain>DSM 6724 / Z-1310</strain>
    </source>
</reference>